<gene>
    <name type="primary">Slfnl1</name>
</gene>
<comment type="similarity">
    <text evidence="3">Belongs to the Schlafen family. Subgroup I subfamily.</text>
</comment>
<dbReference type="EMBL" id="BC079280">
    <property type="protein sequence ID" value="AAH79280.1"/>
    <property type="molecule type" value="mRNA"/>
</dbReference>
<dbReference type="RefSeq" id="NP_001019518.1">
    <property type="nucleotide sequence ID" value="NM_001024347.1"/>
</dbReference>
<dbReference type="STRING" id="10116.ENSRNOP00000013193"/>
<dbReference type="PhosphoSitePlus" id="Q6AXX1"/>
<dbReference type="PaxDb" id="10116-ENSRNOP00000013193"/>
<dbReference type="GeneID" id="500540"/>
<dbReference type="KEGG" id="rno:500540"/>
<dbReference type="UCSC" id="RGD:1564075">
    <property type="organism name" value="rat"/>
</dbReference>
<dbReference type="AGR" id="RGD:1564075"/>
<dbReference type="CTD" id="200172"/>
<dbReference type="RGD" id="1564075">
    <property type="gene designation" value="Slfnl1"/>
</dbReference>
<dbReference type="VEuPathDB" id="HostDB:ENSRNOG00000032183"/>
<dbReference type="eggNOG" id="ENOG502QTT1">
    <property type="taxonomic scope" value="Eukaryota"/>
</dbReference>
<dbReference type="HOGENOM" id="CLU_034269_0_0_1"/>
<dbReference type="InParanoid" id="Q6AXX1"/>
<dbReference type="OrthoDB" id="10259112at2759"/>
<dbReference type="PhylomeDB" id="Q6AXX1"/>
<dbReference type="TreeFam" id="TF337569"/>
<dbReference type="PRO" id="PR:Q6AXX1"/>
<dbReference type="Proteomes" id="UP000002494">
    <property type="component" value="Chromosome 5"/>
</dbReference>
<dbReference type="Bgee" id="ENSRNOG00000009906">
    <property type="expression patterns" value="Expressed in testis and 17 other cell types or tissues"/>
</dbReference>
<dbReference type="GO" id="GO:0005524">
    <property type="term" value="F:ATP binding"/>
    <property type="evidence" value="ECO:0007669"/>
    <property type="project" value="UniProtKB-KW"/>
</dbReference>
<dbReference type="Gene3D" id="3.30.950.30">
    <property type="entry name" value="Schlafen, AAA domain"/>
    <property type="match status" value="1"/>
</dbReference>
<dbReference type="InterPro" id="IPR029684">
    <property type="entry name" value="Schlafen"/>
</dbReference>
<dbReference type="InterPro" id="IPR007421">
    <property type="entry name" value="Schlafen_AlbA_2_dom"/>
</dbReference>
<dbReference type="InterPro" id="IPR038461">
    <property type="entry name" value="Schlafen_AlbA_2_dom_sf"/>
</dbReference>
<dbReference type="PANTHER" id="PTHR12155">
    <property type="entry name" value="SCHLAFEN"/>
    <property type="match status" value="1"/>
</dbReference>
<dbReference type="PANTHER" id="PTHR12155:SF29">
    <property type="entry name" value="SCHLAFEN-LIKE PROTEIN 1"/>
    <property type="match status" value="1"/>
</dbReference>
<dbReference type="Pfam" id="PF04326">
    <property type="entry name" value="SLFN_AlbA_2"/>
    <property type="match status" value="1"/>
</dbReference>
<keyword id="KW-0067">ATP-binding</keyword>
<keyword id="KW-0175">Coiled coil</keyword>
<keyword id="KW-0547">Nucleotide-binding</keyword>
<keyword id="KW-1185">Reference proteome</keyword>
<organism>
    <name type="scientific">Rattus norvegicus</name>
    <name type="common">Rat</name>
    <dbReference type="NCBI Taxonomy" id="10116"/>
    <lineage>
        <taxon>Eukaryota</taxon>
        <taxon>Metazoa</taxon>
        <taxon>Chordata</taxon>
        <taxon>Craniata</taxon>
        <taxon>Vertebrata</taxon>
        <taxon>Euteleostomi</taxon>
        <taxon>Mammalia</taxon>
        <taxon>Eutheria</taxon>
        <taxon>Euarchontoglires</taxon>
        <taxon>Glires</taxon>
        <taxon>Rodentia</taxon>
        <taxon>Myomorpha</taxon>
        <taxon>Muroidea</taxon>
        <taxon>Muridae</taxon>
        <taxon>Murinae</taxon>
        <taxon>Rattus</taxon>
    </lineage>
</organism>
<accession>Q6AXX1</accession>
<proteinExistence type="evidence at transcript level"/>
<evidence type="ECO:0000255" key="1"/>
<evidence type="ECO:0000256" key="2">
    <source>
        <dbReference type="SAM" id="MobiDB-lite"/>
    </source>
</evidence>
<evidence type="ECO:0000305" key="3"/>
<name>SLNL1_RAT</name>
<reference key="1">
    <citation type="journal article" date="2004" name="Genome Res.">
        <title>The status, quality, and expansion of the NIH full-length cDNA project: the Mammalian Gene Collection (MGC).</title>
        <authorList>
            <consortium name="The MGC Project Team"/>
        </authorList>
    </citation>
    <scope>NUCLEOTIDE SEQUENCE [LARGE SCALE MRNA]</scope>
    <source>
        <tissue>Testis</tissue>
    </source>
</reference>
<feature type="chain" id="PRO_0000283001" description="Schlafen-like protein 1">
    <location>
        <begin position="1"/>
        <end position="414"/>
    </location>
</feature>
<feature type="region of interest" description="Disordered" evidence="2">
    <location>
        <begin position="141"/>
        <end position="203"/>
    </location>
</feature>
<feature type="coiled-coil region" evidence="1">
    <location>
        <begin position="373"/>
        <end position="407"/>
    </location>
</feature>
<feature type="compositionally biased region" description="Pro residues" evidence="2">
    <location>
        <begin position="154"/>
        <end position="185"/>
    </location>
</feature>
<feature type="binding site" evidence="1">
    <location>
        <begin position="268"/>
        <end position="275"/>
    </location>
    <ligand>
        <name>ATP</name>
        <dbReference type="ChEBI" id="CHEBI:30616"/>
    </ligand>
</feature>
<protein>
    <recommendedName>
        <fullName>Schlafen-like protein 1</fullName>
    </recommendedName>
</protein>
<sequence>MTLRKRSAQTKMWESPVVSQGKPSLLELPLKESLPKDSGLKAVPSTHTLYVGHLNPQFSVPVLACLLRDTLERLELPVAREQIEVVRRPRNTYALVQVAAPKAVLASLPWRLQMALEEQLILKELTARGKELVLSEGLESLHHREQDDSGPSPSHSPGPSPGPSPGPSPGFRRPPLPQLADPPPNWGSAGRRQISQNRPSGVRSDSAIVHQKILGQEQLFQGAFLGSETRNMEFKRGGGEYLSLAFKHHVRRYVCAFLNSEGGSLLVGVEDSGLVQGIHCSHRDEDRTRLLVDSILQGFKPQVFPDAYTLTFIPVISTTMTSVPLKVLRLTVHTPKAQGEPQLYETDQGEVFLRRDGSIQGPLSVGAIQDWCRQKWTAELSKLEEKVDVLTLEKEQLQEQLRQRQTLSCSCCVL</sequence>